<sequence>MTAPSQVLKIRRPDDWHVHLRDGDMLKTVVPYTSEIYGRAIVMPNLASPITTVDAAIAYRQRILDAVPAGHDFTPLMTCYLTDSLDADELERGFHEGVFTAAKLYPANATTNSSHGVTSVDAIMPVLERMEKLGMPLLVHGEVTHAEVDIFDREARFIDTVMEPLRQRLTALKVVFEHITTKDAAQYVRDGNDYLAATITPQHLMFNRNDMLVGGIRPHLYCLPILKRNIHQQALRELVASGFTRAFLGTDSAPHSRHRKETSCGCAGCFNAPSALGSYAAVFEEMNALAHFEAFCSLNGPQFYGLPVNAGWVELVRDEQQVPENIALADDSLVPFLAGETVRWSVKK</sequence>
<protein>
    <recommendedName>
        <fullName evidence="1">Dihydroorotase</fullName>
        <shortName evidence="1">DHOase</shortName>
        <ecNumber evidence="1">3.5.2.3</ecNumber>
    </recommendedName>
</protein>
<reference key="1">
    <citation type="journal article" date="2008" name="Genome Res.">
        <title>Comparative genome analysis of Salmonella enteritidis PT4 and Salmonella gallinarum 287/91 provides insights into evolutionary and host adaptation pathways.</title>
        <authorList>
            <person name="Thomson N.R."/>
            <person name="Clayton D.J."/>
            <person name="Windhorst D."/>
            <person name="Vernikos G."/>
            <person name="Davidson S."/>
            <person name="Churcher C."/>
            <person name="Quail M.A."/>
            <person name="Stevens M."/>
            <person name="Jones M.A."/>
            <person name="Watson M."/>
            <person name="Barron A."/>
            <person name="Layton A."/>
            <person name="Pickard D."/>
            <person name="Kingsley R.A."/>
            <person name="Bignell A."/>
            <person name="Clark L."/>
            <person name="Harris B."/>
            <person name="Ormond D."/>
            <person name="Abdellah Z."/>
            <person name="Brooks K."/>
            <person name="Cherevach I."/>
            <person name="Chillingworth T."/>
            <person name="Woodward J."/>
            <person name="Norberczak H."/>
            <person name="Lord A."/>
            <person name="Arrowsmith C."/>
            <person name="Jagels K."/>
            <person name="Moule S."/>
            <person name="Mungall K."/>
            <person name="Saunders M."/>
            <person name="Whitehead S."/>
            <person name="Chabalgoity J.A."/>
            <person name="Maskell D."/>
            <person name="Humphreys T."/>
            <person name="Roberts M."/>
            <person name="Barrow P.A."/>
            <person name="Dougan G."/>
            <person name="Parkhill J."/>
        </authorList>
    </citation>
    <scope>NUCLEOTIDE SEQUENCE [LARGE SCALE GENOMIC DNA]</scope>
    <source>
        <strain>P125109</strain>
    </source>
</reference>
<proteinExistence type="inferred from homology"/>
<accession>B5QY02</accession>
<comment type="function">
    <text evidence="1">Catalyzes the reversible cyclization of carbamoyl aspartate to dihydroorotate.</text>
</comment>
<comment type="catalytic activity">
    <reaction evidence="1">
        <text>(S)-dihydroorotate + H2O = N-carbamoyl-L-aspartate + H(+)</text>
        <dbReference type="Rhea" id="RHEA:24296"/>
        <dbReference type="ChEBI" id="CHEBI:15377"/>
        <dbReference type="ChEBI" id="CHEBI:15378"/>
        <dbReference type="ChEBI" id="CHEBI:30864"/>
        <dbReference type="ChEBI" id="CHEBI:32814"/>
        <dbReference type="EC" id="3.5.2.3"/>
    </reaction>
</comment>
<comment type="cofactor">
    <cofactor evidence="1">
        <name>Zn(2+)</name>
        <dbReference type="ChEBI" id="CHEBI:29105"/>
    </cofactor>
    <text evidence="1">Binds 2 Zn(2+) ions per subunit.</text>
</comment>
<comment type="pathway">
    <text evidence="1">Pyrimidine metabolism; UMP biosynthesis via de novo pathway; (S)-dihydroorotate from bicarbonate: step 3/3.</text>
</comment>
<comment type="subunit">
    <text evidence="1">Homodimer.</text>
</comment>
<comment type="similarity">
    <text evidence="1">Belongs to the metallo-dependent hydrolases superfamily. DHOase family. Class II DHOase subfamily.</text>
</comment>
<organism>
    <name type="scientific">Salmonella enteritidis PT4 (strain P125109)</name>
    <dbReference type="NCBI Taxonomy" id="550537"/>
    <lineage>
        <taxon>Bacteria</taxon>
        <taxon>Pseudomonadati</taxon>
        <taxon>Pseudomonadota</taxon>
        <taxon>Gammaproteobacteria</taxon>
        <taxon>Enterobacterales</taxon>
        <taxon>Enterobacteriaceae</taxon>
        <taxon>Salmonella</taxon>
    </lineage>
</organism>
<gene>
    <name evidence="1" type="primary">pyrC</name>
    <name type="ordered locus">SEN1885</name>
</gene>
<keyword id="KW-0378">Hydrolase</keyword>
<keyword id="KW-0479">Metal-binding</keyword>
<keyword id="KW-0665">Pyrimidine biosynthesis</keyword>
<keyword id="KW-0862">Zinc</keyword>
<name>PYRC_SALEP</name>
<evidence type="ECO:0000255" key="1">
    <source>
        <dbReference type="HAMAP-Rule" id="MF_00219"/>
    </source>
</evidence>
<feature type="chain" id="PRO_1000100057" description="Dihydroorotase">
    <location>
        <begin position="1"/>
        <end position="348"/>
    </location>
</feature>
<feature type="active site" evidence="1">
    <location>
        <position position="251"/>
    </location>
</feature>
<feature type="binding site" evidence="1">
    <location>
        <position position="17"/>
    </location>
    <ligand>
        <name>Zn(2+)</name>
        <dbReference type="ChEBI" id="CHEBI:29105"/>
        <label>1</label>
    </ligand>
</feature>
<feature type="binding site" evidence="1">
    <location>
        <begin position="19"/>
        <end position="21"/>
    </location>
    <ligand>
        <name>substrate</name>
    </ligand>
</feature>
<feature type="binding site" evidence="1">
    <location>
        <position position="19"/>
    </location>
    <ligand>
        <name>Zn(2+)</name>
        <dbReference type="ChEBI" id="CHEBI:29105"/>
        <label>1</label>
    </ligand>
</feature>
<feature type="binding site" evidence="1">
    <location>
        <position position="45"/>
    </location>
    <ligand>
        <name>substrate</name>
    </ligand>
</feature>
<feature type="binding site" description="via carbamate group" evidence="1">
    <location>
        <position position="103"/>
    </location>
    <ligand>
        <name>Zn(2+)</name>
        <dbReference type="ChEBI" id="CHEBI:29105"/>
        <label>1</label>
    </ligand>
</feature>
<feature type="binding site" description="via carbamate group" evidence="1">
    <location>
        <position position="103"/>
    </location>
    <ligand>
        <name>Zn(2+)</name>
        <dbReference type="ChEBI" id="CHEBI:29105"/>
        <label>2</label>
    </ligand>
</feature>
<feature type="binding site" evidence="1">
    <location>
        <position position="140"/>
    </location>
    <ligand>
        <name>substrate</name>
    </ligand>
</feature>
<feature type="binding site" evidence="1">
    <location>
        <position position="140"/>
    </location>
    <ligand>
        <name>Zn(2+)</name>
        <dbReference type="ChEBI" id="CHEBI:29105"/>
        <label>2</label>
    </ligand>
</feature>
<feature type="binding site" evidence="1">
    <location>
        <position position="178"/>
    </location>
    <ligand>
        <name>Zn(2+)</name>
        <dbReference type="ChEBI" id="CHEBI:29105"/>
        <label>2</label>
    </ligand>
</feature>
<feature type="binding site" evidence="1">
    <location>
        <position position="223"/>
    </location>
    <ligand>
        <name>substrate</name>
    </ligand>
</feature>
<feature type="binding site" evidence="1">
    <location>
        <position position="251"/>
    </location>
    <ligand>
        <name>Zn(2+)</name>
        <dbReference type="ChEBI" id="CHEBI:29105"/>
        <label>1</label>
    </ligand>
</feature>
<feature type="binding site" evidence="1">
    <location>
        <position position="255"/>
    </location>
    <ligand>
        <name>substrate</name>
    </ligand>
</feature>
<feature type="binding site" evidence="1">
    <location>
        <position position="267"/>
    </location>
    <ligand>
        <name>substrate</name>
    </ligand>
</feature>
<feature type="modified residue" description="N6-carboxylysine" evidence="1">
    <location>
        <position position="103"/>
    </location>
</feature>
<dbReference type="EC" id="3.5.2.3" evidence="1"/>
<dbReference type="EMBL" id="AM933172">
    <property type="protein sequence ID" value="CAR33465.1"/>
    <property type="molecule type" value="Genomic_DNA"/>
</dbReference>
<dbReference type="RefSeq" id="WP_000126602.1">
    <property type="nucleotide sequence ID" value="NC_011294.1"/>
</dbReference>
<dbReference type="SMR" id="B5QY02"/>
<dbReference type="KEGG" id="set:SEN1885"/>
<dbReference type="HOGENOM" id="CLU_041558_1_0_6"/>
<dbReference type="UniPathway" id="UPA00070">
    <property type="reaction ID" value="UER00117"/>
</dbReference>
<dbReference type="Proteomes" id="UP000000613">
    <property type="component" value="Chromosome"/>
</dbReference>
<dbReference type="GO" id="GO:0005829">
    <property type="term" value="C:cytosol"/>
    <property type="evidence" value="ECO:0007669"/>
    <property type="project" value="TreeGrafter"/>
</dbReference>
<dbReference type="GO" id="GO:0004151">
    <property type="term" value="F:dihydroorotase activity"/>
    <property type="evidence" value="ECO:0007669"/>
    <property type="project" value="UniProtKB-UniRule"/>
</dbReference>
<dbReference type="GO" id="GO:0008270">
    <property type="term" value="F:zinc ion binding"/>
    <property type="evidence" value="ECO:0007669"/>
    <property type="project" value="UniProtKB-UniRule"/>
</dbReference>
<dbReference type="GO" id="GO:0006207">
    <property type="term" value="P:'de novo' pyrimidine nucleobase biosynthetic process"/>
    <property type="evidence" value="ECO:0007669"/>
    <property type="project" value="TreeGrafter"/>
</dbReference>
<dbReference type="GO" id="GO:0044205">
    <property type="term" value="P:'de novo' UMP biosynthetic process"/>
    <property type="evidence" value="ECO:0007669"/>
    <property type="project" value="UniProtKB-UniRule"/>
</dbReference>
<dbReference type="CDD" id="cd01294">
    <property type="entry name" value="DHOase"/>
    <property type="match status" value="1"/>
</dbReference>
<dbReference type="FunFam" id="3.20.20.140:FF:000006">
    <property type="entry name" value="Dihydroorotase"/>
    <property type="match status" value="1"/>
</dbReference>
<dbReference type="Gene3D" id="3.20.20.140">
    <property type="entry name" value="Metal-dependent hydrolases"/>
    <property type="match status" value="1"/>
</dbReference>
<dbReference type="HAMAP" id="MF_00219">
    <property type="entry name" value="PyrC_classII"/>
    <property type="match status" value="1"/>
</dbReference>
<dbReference type="InterPro" id="IPR006680">
    <property type="entry name" value="Amidohydro-rel"/>
</dbReference>
<dbReference type="InterPro" id="IPR004721">
    <property type="entry name" value="DHOdimr"/>
</dbReference>
<dbReference type="InterPro" id="IPR002195">
    <property type="entry name" value="Dihydroorotase_CS"/>
</dbReference>
<dbReference type="InterPro" id="IPR032466">
    <property type="entry name" value="Metal_Hydrolase"/>
</dbReference>
<dbReference type="NCBIfam" id="TIGR00856">
    <property type="entry name" value="pyrC_dimer"/>
    <property type="match status" value="1"/>
</dbReference>
<dbReference type="PANTHER" id="PTHR43137">
    <property type="entry name" value="DIHYDROOROTASE"/>
    <property type="match status" value="1"/>
</dbReference>
<dbReference type="PANTHER" id="PTHR43137:SF1">
    <property type="entry name" value="DIHYDROOROTASE"/>
    <property type="match status" value="1"/>
</dbReference>
<dbReference type="Pfam" id="PF01979">
    <property type="entry name" value="Amidohydro_1"/>
    <property type="match status" value="1"/>
</dbReference>
<dbReference type="PIRSF" id="PIRSF001237">
    <property type="entry name" value="DHOdimr"/>
    <property type="match status" value="1"/>
</dbReference>
<dbReference type="SUPFAM" id="SSF51556">
    <property type="entry name" value="Metallo-dependent hydrolases"/>
    <property type="match status" value="1"/>
</dbReference>
<dbReference type="PROSITE" id="PS00482">
    <property type="entry name" value="DIHYDROOROTASE_1"/>
    <property type="match status" value="1"/>
</dbReference>
<dbReference type="PROSITE" id="PS00483">
    <property type="entry name" value="DIHYDROOROTASE_2"/>
    <property type="match status" value="1"/>
</dbReference>